<accession>Q925Y6</accession>
<gene>
    <name evidence="2" type="primary">tufA</name>
    <name type="ordered locus">R01339</name>
    <name type="ORF">SMc01311</name>
</gene>
<gene>
    <name evidence="2" type="primary">tufB</name>
    <name type="ordered locus">R01354</name>
    <name type="ORF">SMc01326</name>
</gene>
<evidence type="ECO:0000250" key="1"/>
<evidence type="ECO:0000255" key="2">
    <source>
        <dbReference type="HAMAP-Rule" id="MF_00118"/>
    </source>
</evidence>
<keyword id="KW-0963">Cytoplasm</keyword>
<keyword id="KW-0251">Elongation factor</keyword>
<keyword id="KW-0342">GTP-binding</keyword>
<keyword id="KW-0378">Hydrolase</keyword>
<keyword id="KW-0460">Magnesium</keyword>
<keyword id="KW-0479">Metal-binding</keyword>
<keyword id="KW-0547">Nucleotide-binding</keyword>
<keyword id="KW-0648">Protein biosynthesis</keyword>
<keyword id="KW-1185">Reference proteome</keyword>
<feature type="chain" id="PRO_0000091371" description="Elongation factor Tu">
    <location>
        <begin position="1"/>
        <end position="391"/>
    </location>
</feature>
<feature type="domain" description="tr-type G">
    <location>
        <begin position="10"/>
        <end position="201"/>
    </location>
</feature>
<feature type="region of interest" description="G1" evidence="1">
    <location>
        <begin position="19"/>
        <end position="26"/>
    </location>
</feature>
<feature type="region of interest" description="G2" evidence="1">
    <location>
        <begin position="55"/>
        <end position="59"/>
    </location>
</feature>
<feature type="region of interest" description="G3" evidence="1">
    <location>
        <begin position="76"/>
        <end position="79"/>
    </location>
</feature>
<feature type="region of interest" description="G4" evidence="1">
    <location>
        <begin position="131"/>
        <end position="134"/>
    </location>
</feature>
<feature type="region of interest" description="G5" evidence="1">
    <location>
        <begin position="169"/>
        <end position="171"/>
    </location>
</feature>
<feature type="binding site" evidence="2">
    <location>
        <begin position="19"/>
        <end position="26"/>
    </location>
    <ligand>
        <name>GTP</name>
        <dbReference type="ChEBI" id="CHEBI:37565"/>
    </ligand>
</feature>
<feature type="binding site" evidence="2">
    <location>
        <position position="26"/>
    </location>
    <ligand>
        <name>Mg(2+)</name>
        <dbReference type="ChEBI" id="CHEBI:18420"/>
    </ligand>
</feature>
<feature type="binding site" evidence="2">
    <location>
        <begin position="76"/>
        <end position="80"/>
    </location>
    <ligand>
        <name>GTP</name>
        <dbReference type="ChEBI" id="CHEBI:37565"/>
    </ligand>
</feature>
<feature type="binding site" evidence="2">
    <location>
        <begin position="131"/>
        <end position="134"/>
    </location>
    <ligand>
        <name>GTP</name>
        <dbReference type="ChEBI" id="CHEBI:37565"/>
    </ligand>
</feature>
<reference key="1">
    <citation type="journal article" date="2001" name="Proc. Natl. Acad. Sci. U.S.A.">
        <title>Analysis of the chromosome sequence of the legume symbiont Sinorhizobium meliloti strain 1021.</title>
        <authorList>
            <person name="Capela D."/>
            <person name="Barloy-Hubler F."/>
            <person name="Gouzy J."/>
            <person name="Bothe G."/>
            <person name="Ampe F."/>
            <person name="Batut J."/>
            <person name="Boistard P."/>
            <person name="Becker A."/>
            <person name="Boutry M."/>
            <person name="Cadieu E."/>
            <person name="Dreano S."/>
            <person name="Gloux S."/>
            <person name="Godrie T."/>
            <person name="Goffeau A."/>
            <person name="Kahn D."/>
            <person name="Kiss E."/>
            <person name="Lelaure V."/>
            <person name="Masuy D."/>
            <person name="Pohl T."/>
            <person name="Portetelle D."/>
            <person name="Puehler A."/>
            <person name="Purnelle B."/>
            <person name="Ramsperger U."/>
            <person name="Renard C."/>
            <person name="Thebault P."/>
            <person name="Vandenbol M."/>
            <person name="Weidner S."/>
            <person name="Galibert F."/>
        </authorList>
    </citation>
    <scope>NUCLEOTIDE SEQUENCE [LARGE SCALE GENOMIC DNA]</scope>
    <source>
        <strain>1021</strain>
    </source>
</reference>
<reference key="2">
    <citation type="journal article" date="2001" name="Science">
        <title>The composite genome of the legume symbiont Sinorhizobium meliloti.</title>
        <authorList>
            <person name="Galibert F."/>
            <person name="Finan T.M."/>
            <person name="Long S.R."/>
            <person name="Puehler A."/>
            <person name="Abola P."/>
            <person name="Ampe F."/>
            <person name="Barloy-Hubler F."/>
            <person name="Barnett M.J."/>
            <person name="Becker A."/>
            <person name="Boistard P."/>
            <person name="Bothe G."/>
            <person name="Boutry M."/>
            <person name="Bowser L."/>
            <person name="Buhrmester J."/>
            <person name="Cadieu E."/>
            <person name="Capela D."/>
            <person name="Chain P."/>
            <person name="Cowie A."/>
            <person name="Davis R.W."/>
            <person name="Dreano S."/>
            <person name="Federspiel N.A."/>
            <person name="Fisher R.F."/>
            <person name="Gloux S."/>
            <person name="Godrie T."/>
            <person name="Goffeau A."/>
            <person name="Golding B."/>
            <person name="Gouzy J."/>
            <person name="Gurjal M."/>
            <person name="Hernandez-Lucas I."/>
            <person name="Hong A."/>
            <person name="Huizar L."/>
            <person name="Hyman R.W."/>
            <person name="Jones T."/>
            <person name="Kahn D."/>
            <person name="Kahn M.L."/>
            <person name="Kalman S."/>
            <person name="Keating D.H."/>
            <person name="Kiss E."/>
            <person name="Komp C."/>
            <person name="Lelaure V."/>
            <person name="Masuy D."/>
            <person name="Palm C."/>
            <person name="Peck M.C."/>
            <person name="Pohl T.M."/>
            <person name="Portetelle D."/>
            <person name="Purnelle B."/>
            <person name="Ramsperger U."/>
            <person name="Surzycki R."/>
            <person name="Thebault P."/>
            <person name="Vandenbol M."/>
            <person name="Vorhoelter F.J."/>
            <person name="Weidner S."/>
            <person name="Wells D.H."/>
            <person name="Wong K."/>
            <person name="Yeh K.-C."/>
            <person name="Batut J."/>
        </authorList>
    </citation>
    <scope>NUCLEOTIDE SEQUENCE [LARGE SCALE GENOMIC DNA]</scope>
    <source>
        <strain>1021</strain>
    </source>
</reference>
<dbReference type="EC" id="3.6.5.3" evidence="2"/>
<dbReference type="EMBL" id="AL591688">
    <property type="protein sequence ID" value="CAC45918.1"/>
    <property type="molecule type" value="Genomic_DNA"/>
</dbReference>
<dbReference type="EMBL" id="AL591688">
    <property type="protein sequence ID" value="CAC45933.1"/>
    <property type="molecule type" value="Genomic_DNA"/>
</dbReference>
<dbReference type="RefSeq" id="NP_385445.1">
    <property type="nucleotide sequence ID" value="NC_003047.1"/>
</dbReference>
<dbReference type="RefSeq" id="NP_385460.1">
    <property type="nucleotide sequence ID" value="NC_003047.1"/>
</dbReference>
<dbReference type="SMR" id="Q925Y6"/>
<dbReference type="EnsemblBacteria" id="CAC45918">
    <property type="protein sequence ID" value="CAC45918"/>
    <property type="gene ID" value="SMc01326"/>
</dbReference>
<dbReference type="EnsemblBacteria" id="CAC45933">
    <property type="protein sequence ID" value="CAC45933"/>
    <property type="gene ID" value="SMc01311"/>
</dbReference>
<dbReference type="KEGG" id="sme:SMc01311"/>
<dbReference type="KEGG" id="sme:SMc01326"/>
<dbReference type="PATRIC" id="fig|266834.11.peg.2754"/>
<dbReference type="eggNOG" id="COG0050">
    <property type="taxonomic scope" value="Bacteria"/>
</dbReference>
<dbReference type="HOGENOM" id="CLU_007265_0_0_5"/>
<dbReference type="OrthoDB" id="9803139at2"/>
<dbReference type="Proteomes" id="UP000001976">
    <property type="component" value="Chromosome"/>
</dbReference>
<dbReference type="GO" id="GO:0005829">
    <property type="term" value="C:cytosol"/>
    <property type="evidence" value="ECO:0007669"/>
    <property type="project" value="TreeGrafter"/>
</dbReference>
<dbReference type="GO" id="GO:0005525">
    <property type="term" value="F:GTP binding"/>
    <property type="evidence" value="ECO:0007669"/>
    <property type="project" value="UniProtKB-UniRule"/>
</dbReference>
<dbReference type="GO" id="GO:0003924">
    <property type="term" value="F:GTPase activity"/>
    <property type="evidence" value="ECO:0007669"/>
    <property type="project" value="InterPro"/>
</dbReference>
<dbReference type="GO" id="GO:0097216">
    <property type="term" value="F:guanosine tetraphosphate binding"/>
    <property type="evidence" value="ECO:0007669"/>
    <property type="project" value="UniProtKB-ARBA"/>
</dbReference>
<dbReference type="GO" id="GO:0003746">
    <property type="term" value="F:translation elongation factor activity"/>
    <property type="evidence" value="ECO:0007669"/>
    <property type="project" value="UniProtKB-UniRule"/>
</dbReference>
<dbReference type="CDD" id="cd01884">
    <property type="entry name" value="EF_Tu"/>
    <property type="match status" value="1"/>
</dbReference>
<dbReference type="CDD" id="cd03697">
    <property type="entry name" value="EFTU_II"/>
    <property type="match status" value="1"/>
</dbReference>
<dbReference type="CDD" id="cd03707">
    <property type="entry name" value="EFTU_III"/>
    <property type="match status" value="1"/>
</dbReference>
<dbReference type="FunFam" id="2.40.30.10:FF:000001">
    <property type="entry name" value="Elongation factor Tu"/>
    <property type="match status" value="1"/>
</dbReference>
<dbReference type="FunFam" id="3.40.50.300:FF:000003">
    <property type="entry name" value="Elongation factor Tu"/>
    <property type="match status" value="1"/>
</dbReference>
<dbReference type="Gene3D" id="3.40.50.300">
    <property type="entry name" value="P-loop containing nucleotide triphosphate hydrolases"/>
    <property type="match status" value="1"/>
</dbReference>
<dbReference type="Gene3D" id="2.40.30.10">
    <property type="entry name" value="Translation factors"/>
    <property type="match status" value="2"/>
</dbReference>
<dbReference type="HAMAP" id="MF_00118_B">
    <property type="entry name" value="EF_Tu_B"/>
    <property type="match status" value="1"/>
</dbReference>
<dbReference type="InterPro" id="IPR041709">
    <property type="entry name" value="EF-Tu_GTP-bd"/>
</dbReference>
<dbReference type="InterPro" id="IPR050055">
    <property type="entry name" value="EF-Tu_GTPase"/>
</dbReference>
<dbReference type="InterPro" id="IPR004161">
    <property type="entry name" value="EFTu-like_2"/>
</dbReference>
<dbReference type="InterPro" id="IPR033720">
    <property type="entry name" value="EFTU_2"/>
</dbReference>
<dbReference type="InterPro" id="IPR031157">
    <property type="entry name" value="G_TR_CS"/>
</dbReference>
<dbReference type="InterPro" id="IPR027417">
    <property type="entry name" value="P-loop_NTPase"/>
</dbReference>
<dbReference type="InterPro" id="IPR005225">
    <property type="entry name" value="Small_GTP-bd"/>
</dbReference>
<dbReference type="InterPro" id="IPR000795">
    <property type="entry name" value="T_Tr_GTP-bd_dom"/>
</dbReference>
<dbReference type="InterPro" id="IPR009000">
    <property type="entry name" value="Transl_B-barrel_sf"/>
</dbReference>
<dbReference type="InterPro" id="IPR009001">
    <property type="entry name" value="Transl_elong_EF1A/Init_IF2_C"/>
</dbReference>
<dbReference type="InterPro" id="IPR004541">
    <property type="entry name" value="Transl_elong_EFTu/EF1A_bac/org"/>
</dbReference>
<dbReference type="InterPro" id="IPR004160">
    <property type="entry name" value="Transl_elong_EFTu/EF1A_C"/>
</dbReference>
<dbReference type="NCBIfam" id="TIGR00485">
    <property type="entry name" value="EF-Tu"/>
    <property type="match status" value="1"/>
</dbReference>
<dbReference type="NCBIfam" id="NF000766">
    <property type="entry name" value="PRK00049.1"/>
    <property type="match status" value="1"/>
</dbReference>
<dbReference type="NCBIfam" id="NF009372">
    <property type="entry name" value="PRK12735.1"/>
    <property type="match status" value="1"/>
</dbReference>
<dbReference type="NCBIfam" id="NF009373">
    <property type="entry name" value="PRK12736.1"/>
    <property type="match status" value="1"/>
</dbReference>
<dbReference type="NCBIfam" id="TIGR00231">
    <property type="entry name" value="small_GTP"/>
    <property type="match status" value="1"/>
</dbReference>
<dbReference type="PANTHER" id="PTHR43721:SF22">
    <property type="entry name" value="ELONGATION FACTOR TU, MITOCHONDRIAL"/>
    <property type="match status" value="1"/>
</dbReference>
<dbReference type="PANTHER" id="PTHR43721">
    <property type="entry name" value="ELONGATION FACTOR TU-RELATED"/>
    <property type="match status" value="1"/>
</dbReference>
<dbReference type="Pfam" id="PF00009">
    <property type="entry name" value="GTP_EFTU"/>
    <property type="match status" value="1"/>
</dbReference>
<dbReference type="Pfam" id="PF03144">
    <property type="entry name" value="GTP_EFTU_D2"/>
    <property type="match status" value="1"/>
</dbReference>
<dbReference type="Pfam" id="PF03143">
    <property type="entry name" value="GTP_EFTU_D3"/>
    <property type="match status" value="1"/>
</dbReference>
<dbReference type="PRINTS" id="PR00315">
    <property type="entry name" value="ELONGATNFCT"/>
</dbReference>
<dbReference type="SUPFAM" id="SSF50465">
    <property type="entry name" value="EF-Tu/eEF-1alpha/eIF2-gamma C-terminal domain"/>
    <property type="match status" value="1"/>
</dbReference>
<dbReference type="SUPFAM" id="SSF52540">
    <property type="entry name" value="P-loop containing nucleoside triphosphate hydrolases"/>
    <property type="match status" value="1"/>
</dbReference>
<dbReference type="SUPFAM" id="SSF50447">
    <property type="entry name" value="Translation proteins"/>
    <property type="match status" value="1"/>
</dbReference>
<dbReference type="PROSITE" id="PS00301">
    <property type="entry name" value="G_TR_1"/>
    <property type="match status" value="1"/>
</dbReference>
<dbReference type="PROSITE" id="PS51722">
    <property type="entry name" value="G_TR_2"/>
    <property type="match status" value="1"/>
</dbReference>
<sequence>MAKSKFERNKPHVNIGTIGHVDHGKTSLTAAITKYFGEFKAYDQIDAAPEEKARGITISTAHVEYETPNRHYAHVDCPGHADYVKNMITGAAQMDGAILVVSAADGPMPQTREHILLARQVGVPAIVVFLNKVDQVDDAELLELVELEVRELLSSYEFPGDDIPIVKGSALAALEDSDKKIGEDAIRELMAAVDAYIPTPERPIDQPFLMPIEDVFSISGRGTVVTGRVERGIVKVGEEIEIVGIRPTTKTTCTGVEMFRKLLDQGQAGDNIGALLRGVDRNGVERGQILCKPGSVKPHRKFKAEAYILTKEEGGRHTPFFTNYRPQFYFRTTDVTGIVTLPEGTEMVMPGDNVTVDVELIVPIAMEEKLRFAIREGGRTVGAGIVASIVE</sequence>
<name>EFTU_RHIME</name>
<comment type="function">
    <text evidence="2">GTP hydrolase that promotes the GTP-dependent binding of aminoacyl-tRNA to the A-site of ribosomes during protein biosynthesis.</text>
</comment>
<comment type="catalytic activity">
    <reaction evidence="2">
        <text>GTP + H2O = GDP + phosphate + H(+)</text>
        <dbReference type="Rhea" id="RHEA:19669"/>
        <dbReference type="ChEBI" id="CHEBI:15377"/>
        <dbReference type="ChEBI" id="CHEBI:15378"/>
        <dbReference type="ChEBI" id="CHEBI:37565"/>
        <dbReference type="ChEBI" id="CHEBI:43474"/>
        <dbReference type="ChEBI" id="CHEBI:58189"/>
        <dbReference type="EC" id="3.6.5.3"/>
    </reaction>
    <physiologicalReaction direction="left-to-right" evidence="2">
        <dbReference type="Rhea" id="RHEA:19670"/>
    </physiologicalReaction>
</comment>
<comment type="subunit">
    <text evidence="2">Monomer.</text>
</comment>
<comment type="subcellular location">
    <subcellularLocation>
        <location evidence="2">Cytoplasm</location>
    </subcellularLocation>
</comment>
<comment type="similarity">
    <text evidence="2">Belongs to the TRAFAC class translation factor GTPase superfamily. Classic translation factor GTPase family. EF-Tu/EF-1A subfamily.</text>
</comment>
<protein>
    <recommendedName>
        <fullName evidence="2">Elongation factor Tu</fullName>
        <shortName evidence="2">EF-Tu</shortName>
        <ecNumber evidence="2">3.6.5.3</ecNumber>
    </recommendedName>
</protein>
<proteinExistence type="inferred from homology"/>
<organism>
    <name type="scientific">Rhizobium meliloti (strain 1021)</name>
    <name type="common">Ensifer meliloti</name>
    <name type="synonym">Sinorhizobium meliloti</name>
    <dbReference type="NCBI Taxonomy" id="266834"/>
    <lineage>
        <taxon>Bacteria</taxon>
        <taxon>Pseudomonadati</taxon>
        <taxon>Pseudomonadota</taxon>
        <taxon>Alphaproteobacteria</taxon>
        <taxon>Hyphomicrobiales</taxon>
        <taxon>Rhizobiaceae</taxon>
        <taxon>Sinorhizobium/Ensifer group</taxon>
        <taxon>Sinorhizobium</taxon>
    </lineage>
</organism>